<dbReference type="EC" id="2.4.2.17" evidence="1"/>
<dbReference type="EMBL" id="CP001357">
    <property type="protein sequence ID" value="ACN84783.1"/>
    <property type="molecule type" value="Genomic_DNA"/>
</dbReference>
<dbReference type="RefSeq" id="WP_012671813.1">
    <property type="nucleotide sequence ID" value="NC_012225.1"/>
</dbReference>
<dbReference type="SMR" id="C0QWY0"/>
<dbReference type="STRING" id="565034.BHWA1_02329"/>
<dbReference type="KEGG" id="bhy:BHWA1_02329"/>
<dbReference type="eggNOG" id="COG0040">
    <property type="taxonomic scope" value="Bacteria"/>
</dbReference>
<dbReference type="HOGENOM" id="CLU_038115_2_0_12"/>
<dbReference type="UniPathway" id="UPA00031">
    <property type="reaction ID" value="UER00006"/>
</dbReference>
<dbReference type="Proteomes" id="UP000001803">
    <property type="component" value="Chromosome"/>
</dbReference>
<dbReference type="GO" id="GO:0005737">
    <property type="term" value="C:cytoplasm"/>
    <property type="evidence" value="ECO:0007669"/>
    <property type="project" value="UniProtKB-SubCell"/>
</dbReference>
<dbReference type="GO" id="GO:0005524">
    <property type="term" value="F:ATP binding"/>
    <property type="evidence" value="ECO:0007669"/>
    <property type="project" value="UniProtKB-KW"/>
</dbReference>
<dbReference type="GO" id="GO:0003879">
    <property type="term" value="F:ATP phosphoribosyltransferase activity"/>
    <property type="evidence" value="ECO:0007669"/>
    <property type="project" value="UniProtKB-UniRule"/>
</dbReference>
<dbReference type="GO" id="GO:0000105">
    <property type="term" value="P:L-histidine biosynthetic process"/>
    <property type="evidence" value="ECO:0007669"/>
    <property type="project" value="UniProtKB-UniRule"/>
</dbReference>
<dbReference type="CDD" id="cd13595">
    <property type="entry name" value="PBP2_HisGs"/>
    <property type="match status" value="1"/>
</dbReference>
<dbReference type="FunFam" id="3.40.190.10:FF:000011">
    <property type="entry name" value="ATP phosphoribosyltransferase"/>
    <property type="match status" value="1"/>
</dbReference>
<dbReference type="Gene3D" id="3.40.190.10">
    <property type="entry name" value="Periplasmic binding protein-like II"/>
    <property type="match status" value="2"/>
</dbReference>
<dbReference type="HAMAP" id="MF_01018">
    <property type="entry name" value="HisG_Short"/>
    <property type="match status" value="1"/>
</dbReference>
<dbReference type="InterPro" id="IPR013820">
    <property type="entry name" value="ATP_PRibTrfase_cat"/>
</dbReference>
<dbReference type="InterPro" id="IPR018198">
    <property type="entry name" value="ATP_PRibTrfase_CS"/>
</dbReference>
<dbReference type="InterPro" id="IPR001348">
    <property type="entry name" value="ATP_PRibTrfase_HisG"/>
</dbReference>
<dbReference type="InterPro" id="IPR024893">
    <property type="entry name" value="ATP_PRibTrfase_HisG_short"/>
</dbReference>
<dbReference type="NCBIfam" id="TIGR00070">
    <property type="entry name" value="hisG"/>
    <property type="match status" value="1"/>
</dbReference>
<dbReference type="PANTHER" id="PTHR21403:SF8">
    <property type="entry name" value="ATP PHOSPHORIBOSYLTRANSFERASE"/>
    <property type="match status" value="1"/>
</dbReference>
<dbReference type="PANTHER" id="PTHR21403">
    <property type="entry name" value="ATP PHOSPHORIBOSYLTRANSFERASE ATP-PRTASE"/>
    <property type="match status" value="1"/>
</dbReference>
<dbReference type="Pfam" id="PF01634">
    <property type="entry name" value="HisG"/>
    <property type="match status" value="1"/>
</dbReference>
<dbReference type="SUPFAM" id="SSF53850">
    <property type="entry name" value="Periplasmic binding protein-like II"/>
    <property type="match status" value="1"/>
</dbReference>
<dbReference type="PROSITE" id="PS01316">
    <property type="entry name" value="ATP_P_PHORIBOSYLTR"/>
    <property type="match status" value="1"/>
</dbReference>
<proteinExistence type="inferred from homology"/>
<keyword id="KW-0028">Amino-acid biosynthesis</keyword>
<keyword id="KW-0067">ATP-binding</keyword>
<keyword id="KW-0963">Cytoplasm</keyword>
<keyword id="KW-0328">Glycosyltransferase</keyword>
<keyword id="KW-0368">Histidine biosynthesis</keyword>
<keyword id="KW-0547">Nucleotide-binding</keyword>
<keyword id="KW-0808">Transferase</keyword>
<sequence length="206" mass="23638">MINIALPKGRLVNKVYTLFEKIGYENKELLEDNRKLVFENKDKNVRYLIVKPSDVGIYVEKGVADIGIVGKDILLENNHDVYELLDLKFGKCRVCMASVNGYKEDIERRLRVATKYVNISKNYFNSINRDVEIIKLNGSIELAPILNLSDVIVDIVETGSTLRENNLTVIKEIIDYISARLIVNKVSYKFKNDLIKTIIKNIEEVL</sequence>
<protein>
    <recommendedName>
        <fullName evidence="1">ATP phosphoribosyltransferase</fullName>
        <shortName evidence="1">ATP-PRT</shortName>
        <shortName evidence="1">ATP-PRTase</shortName>
        <ecNumber evidence="1">2.4.2.17</ecNumber>
    </recommendedName>
</protein>
<reference key="1">
    <citation type="journal article" date="2009" name="PLoS ONE">
        <title>Genome sequence of the pathogenic intestinal spirochete Brachyspira hyodysenteriae reveals adaptations to its lifestyle in the porcine large intestine.</title>
        <authorList>
            <person name="Bellgard M.I."/>
            <person name="Wanchanthuek P."/>
            <person name="La T."/>
            <person name="Ryan K."/>
            <person name="Moolhuijzen P."/>
            <person name="Albertyn Z."/>
            <person name="Shaban B."/>
            <person name="Motro Y."/>
            <person name="Dunn D.S."/>
            <person name="Schibeci D."/>
            <person name="Hunter A."/>
            <person name="Barrero R."/>
            <person name="Phillips N.D."/>
            <person name="Hampson D.J."/>
        </authorList>
    </citation>
    <scope>NUCLEOTIDE SEQUENCE [LARGE SCALE GENOMIC DNA]</scope>
    <source>
        <strain>ATCC 49526 / WA1</strain>
    </source>
</reference>
<gene>
    <name evidence="1" type="primary">hisG</name>
    <name type="ordered locus">BHWA1_02329</name>
</gene>
<comment type="function">
    <text evidence="1">Catalyzes the condensation of ATP and 5-phosphoribose 1-diphosphate to form N'-(5'-phosphoribosyl)-ATP (PR-ATP). Has a crucial role in the pathway because the rate of histidine biosynthesis seems to be controlled primarily by regulation of HisG enzymatic activity.</text>
</comment>
<comment type="catalytic activity">
    <reaction evidence="1">
        <text>1-(5-phospho-beta-D-ribosyl)-ATP + diphosphate = 5-phospho-alpha-D-ribose 1-diphosphate + ATP</text>
        <dbReference type="Rhea" id="RHEA:18473"/>
        <dbReference type="ChEBI" id="CHEBI:30616"/>
        <dbReference type="ChEBI" id="CHEBI:33019"/>
        <dbReference type="ChEBI" id="CHEBI:58017"/>
        <dbReference type="ChEBI" id="CHEBI:73183"/>
        <dbReference type="EC" id="2.4.2.17"/>
    </reaction>
</comment>
<comment type="pathway">
    <text evidence="1">Amino-acid biosynthesis; L-histidine biosynthesis; L-histidine from 5-phospho-alpha-D-ribose 1-diphosphate: step 1/9.</text>
</comment>
<comment type="subunit">
    <text evidence="1">Heteromultimer composed of HisG and HisZ subunits.</text>
</comment>
<comment type="subcellular location">
    <subcellularLocation>
        <location evidence="1">Cytoplasm</location>
    </subcellularLocation>
</comment>
<comment type="domain">
    <text>Lacks the C-terminal regulatory region which is replaced by HisZ.</text>
</comment>
<comment type="similarity">
    <text evidence="1">Belongs to the ATP phosphoribosyltransferase family. Short subfamily.</text>
</comment>
<accession>C0QWY0</accession>
<feature type="chain" id="PRO_1000213256" description="ATP phosphoribosyltransferase">
    <location>
        <begin position="1"/>
        <end position="206"/>
    </location>
</feature>
<evidence type="ECO:0000255" key="1">
    <source>
        <dbReference type="HAMAP-Rule" id="MF_01018"/>
    </source>
</evidence>
<name>HIS1_BRAHW</name>
<organism>
    <name type="scientific">Brachyspira hyodysenteriae (strain ATCC 49526 / WA1)</name>
    <dbReference type="NCBI Taxonomy" id="565034"/>
    <lineage>
        <taxon>Bacteria</taxon>
        <taxon>Pseudomonadati</taxon>
        <taxon>Spirochaetota</taxon>
        <taxon>Spirochaetia</taxon>
        <taxon>Brachyspirales</taxon>
        <taxon>Brachyspiraceae</taxon>
        <taxon>Brachyspira</taxon>
    </lineage>
</organism>